<protein>
    <recommendedName>
        <fullName evidence="1">Large ribosomal subunit protein bL33</fullName>
    </recommendedName>
    <alternativeName>
        <fullName evidence="2">50S ribosomal protein L33</fullName>
    </alternativeName>
</protein>
<name>RL33_PSET1</name>
<sequence>MRDKIRLVSTAGTGFFYTTDKNKRNMPEKMEIKKFDPKIRKHVLFKEAKIK</sequence>
<dbReference type="EMBL" id="CR954246">
    <property type="protein sequence ID" value="CAI87689.1"/>
    <property type="molecule type" value="Genomic_DNA"/>
</dbReference>
<dbReference type="SMR" id="Q3IFE7"/>
<dbReference type="STRING" id="326442.PSHAa2641"/>
<dbReference type="KEGG" id="pha:PSHAa2641"/>
<dbReference type="eggNOG" id="COG0267">
    <property type="taxonomic scope" value="Bacteria"/>
</dbReference>
<dbReference type="HOGENOM" id="CLU_190949_1_1_6"/>
<dbReference type="BioCyc" id="PHAL326442:PSHA_RS12995-MONOMER"/>
<dbReference type="Proteomes" id="UP000006843">
    <property type="component" value="Chromosome I"/>
</dbReference>
<dbReference type="GO" id="GO:0022625">
    <property type="term" value="C:cytosolic large ribosomal subunit"/>
    <property type="evidence" value="ECO:0007669"/>
    <property type="project" value="TreeGrafter"/>
</dbReference>
<dbReference type="GO" id="GO:0003735">
    <property type="term" value="F:structural constituent of ribosome"/>
    <property type="evidence" value="ECO:0007669"/>
    <property type="project" value="InterPro"/>
</dbReference>
<dbReference type="GO" id="GO:0006412">
    <property type="term" value="P:translation"/>
    <property type="evidence" value="ECO:0007669"/>
    <property type="project" value="UniProtKB-UniRule"/>
</dbReference>
<dbReference type="FunFam" id="2.20.28.120:FF:000001">
    <property type="entry name" value="50S ribosomal protein L33"/>
    <property type="match status" value="1"/>
</dbReference>
<dbReference type="Gene3D" id="2.20.28.120">
    <property type="entry name" value="Ribosomal protein L33"/>
    <property type="match status" value="1"/>
</dbReference>
<dbReference type="HAMAP" id="MF_00294">
    <property type="entry name" value="Ribosomal_bL33"/>
    <property type="match status" value="1"/>
</dbReference>
<dbReference type="InterPro" id="IPR001705">
    <property type="entry name" value="Ribosomal_bL33"/>
</dbReference>
<dbReference type="InterPro" id="IPR018264">
    <property type="entry name" value="Ribosomal_bL33_CS"/>
</dbReference>
<dbReference type="InterPro" id="IPR038584">
    <property type="entry name" value="Ribosomal_bL33_sf"/>
</dbReference>
<dbReference type="InterPro" id="IPR011332">
    <property type="entry name" value="Ribosomal_zn-bd"/>
</dbReference>
<dbReference type="NCBIfam" id="NF001860">
    <property type="entry name" value="PRK00595.1"/>
    <property type="match status" value="1"/>
</dbReference>
<dbReference type="NCBIfam" id="TIGR01023">
    <property type="entry name" value="rpmG_bact"/>
    <property type="match status" value="1"/>
</dbReference>
<dbReference type="PANTHER" id="PTHR15238">
    <property type="entry name" value="54S RIBOSOMAL PROTEIN L39, MITOCHONDRIAL"/>
    <property type="match status" value="1"/>
</dbReference>
<dbReference type="PANTHER" id="PTHR15238:SF1">
    <property type="entry name" value="LARGE RIBOSOMAL SUBUNIT PROTEIN BL33M"/>
    <property type="match status" value="1"/>
</dbReference>
<dbReference type="Pfam" id="PF00471">
    <property type="entry name" value="Ribosomal_L33"/>
    <property type="match status" value="1"/>
</dbReference>
<dbReference type="SUPFAM" id="SSF57829">
    <property type="entry name" value="Zn-binding ribosomal proteins"/>
    <property type="match status" value="1"/>
</dbReference>
<dbReference type="PROSITE" id="PS00582">
    <property type="entry name" value="RIBOSOMAL_L33"/>
    <property type="match status" value="1"/>
</dbReference>
<accession>Q3IFE7</accession>
<proteinExistence type="inferred from homology"/>
<gene>
    <name evidence="1" type="primary">rpmG</name>
    <name type="ordered locus">PSHAa2641</name>
</gene>
<feature type="chain" id="PRO_0000356618" description="Large ribosomal subunit protein bL33">
    <location>
        <begin position="1"/>
        <end position="51"/>
    </location>
</feature>
<reference key="1">
    <citation type="journal article" date="2005" name="Genome Res.">
        <title>Coping with cold: the genome of the versatile marine Antarctica bacterium Pseudoalteromonas haloplanktis TAC125.</title>
        <authorList>
            <person name="Medigue C."/>
            <person name="Krin E."/>
            <person name="Pascal G."/>
            <person name="Barbe V."/>
            <person name="Bernsel A."/>
            <person name="Bertin P.N."/>
            <person name="Cheung F."/>
            <person name="Cruveiller S."/>
            <person name="D'Amico S."/>
            <person name="Duilio A."/>
            <person name="Fang G."/>
            <person name="Feller G."/>
            <person name="Ho C."/>
            <person name="Mangenot S."/>
            <person name="Marino G."/>
            <person name="Nilsson J."/>
            <person name="Parrilli E."/>
            <person name="Rocha E.P.C."/>
            <person name="Rouy Z."/>
            <person name="Sekowska A."/>
            <person name="Tutino M.L."/>
            <person name="Vallenet D."/>
            <person name="von Heijne G."/>
            <person name="Danchin A."/>
        </authorList>
    </citation>
    <scope>NUCLEOTIDE SEQUENCE [LARGE SCALE GENOMIC DNA]</scope>
    <source>
        <strain>TAC 125</strain>
    </source>
</reference>
<keyword id="KW-1185">Reference proteome</keyword>
<keyword id="KW-0687">Ribonucleoprotein</keyword>
<keyword id="KW-0689">Ribosomal protein</keyword>
<evidence type="ECO:0000255" key="1">
    <source>
        <dbReference type="HAMAP-Rule" id="MF_00294"/>
    </source>
</evidence>
<evidence type="ECO:0000305" key="2"/>
<organism>
    <name type="scientific">Pseudoalteromonas translucida (strain TAC 125)</name>
    <dbReference type="NCBI Taxonomy" id="326442"/>
    <lineage>
        <taxon>Bacteria</taxon>
        <taxon>Pseudomonadati</taxon>
        <taxon>Pseudomonadota</taxon>
        <taxon>Gammaproteobacteria</taxon>
        <taxon>Alteromonadales</taxon>
        <taxon>Pseudoalteromonadaceae</taxon>
        <taxon>Pseudoalteromonas</taxon>
    </lineage>
</organism>
<comment type="similarity">
    <text evidence="1">Belongs to the bacterial ribosomal protein bL33 family.</text>
</comment>